<feature type="chain" id="PRO_0000407260" description="N(2)-fixation sustaining protein CowN">
    <location>
        <begin position="1"/>
        <end position="98"/>
    </location>
</feature>
<protein>
    <recommendedName>
        <fullName evidence="1">N(2)-fixation sustaining protein CowN</fullName>
    </recommendedName>
    <alternativeName>
        <fullName evidence="1">CO weal-nitrogenase</fullName>
    </alternativeName>
</protein>
<evidence type="ECO:0000255" key="1">
    <source>
        <dbReference type="HAMAP-Rule" id="MF_02117"/>
    </source>
</evidence>
<organism>
    <name type="scientific">Paramagnetospirillum magneticum (strain ATCC 700264 / AMB-1)</name>
    <name type="common">Magnetospirillum magneticum</name>
    <dbReference type="NCBI Taxonomy" id="342108"/>
    <lineage>
        <taxon>Bacteria</taxon>
        <taxon>Pseudomonadati</taxon>
        <taxon>Pseudomonadota</taxon>
        <taxon>Alphaproteobacteria</taxon>
        <taxon>Rhodospirillales</taxon>
        <taxon>Magnetospirillaceae</taxon>
        <taxon>Paramagnetospirillum</taxon>
    </lineage>
</organism>
<reference key="1">
    <citation type="journal article" date="2005" name="DNA Res.">
        <title>Complete genome sequence of the facultative anaerobic magnetotactic bacterium Magnetospirillum sp. strain AMB-1.</title>
        <authorList>
            <person name="Matsunaga T."/>
            <person name="Okamura Y."/>
            <person name="Fukuda Y."/>
            <person name="Wahyudi A.T."/>
            <person name="Murase Y."/>
            <person name="Takeyama H."/>
        </authorList>
    </citation>
    <scope>NUCLEOTIDE SEQUENCE [LARGE SCALE GENOMIC DNA]</scope>
    <source>
        <strain>ATCC 700264 / AMB-1</strain>
    </source>
</reference>
<gene>
    <name evidence="1" type="primary">cowN</name>
    <name type="ordered locus">amb1587</name>
</gene>
<dbReference type="EMBL" id="AP007255">
    <property type="protein sequence ID" value="BAE50391.1"/>
    <property type="molecule type" value="Genomic_DNA"/>
</dbReference>
<dbReference type="RefSeq" id="WP_011383997.1">
    <property type="nucleotide sequence ID" value="NC_007626.1"/>
</dbReference>
<dbReference type="STRING" id="342108.amb1587"/>
<dbReference type="KEGG" id="mag:amb1587"/>
<dbReference type="HOGENOM" id="CLU_149349_0_0_5"/>
<dbReference type="OrthoDB" id="7689335at2"/>
<dbReference type="Proteomes" id="UP000007058">
    <property type="component" value="Chromosome"/>
</dbReference>
<dbReference type="GO" id="GO:0009399">
    <property type="term" value="P:nitrogen fixation"/>
    <property type="evidence" value="ECO:0007669"/>
    <property type="project" value="UniProtKB-UniRule"/>
</dbReference>
<dbReference type="HAMAP" id="MF_02117">
    <property type="entry name" value="CowN"/>
    <property type="match status" value="1"/>
</dbReference>
<dbReference type="InterPro" id="IPR024899">
    <property type="entry name" value="CowN"/>
</dbReference>
<dbReference type="NCBIfam" id="NF033689">
    <property type="entry name" value="N2Fix_CO_CowN"/>
    <property type="match status" value="1"/>
</dbReference>
<dbReference type="Pfam" id="PF20543">
    <property type="entry name" value="CowN"/>
    <property type="match status" value="1"/>
</dbReference>
<keyword id="KW-0535">Nitrogen fixation</keyword>
<accession>Q2W6Y4</accession>
<comment type="function">
    <text evidence="1">Is required to sustain N(2)-dependent growth in the presence of low levels of carbon monoxide (CO). Probably acts by protecting the N(2) fixation ability of the nitrogenase complex, which is inactivated in the presence of CO.</text>
</comment>
<comment type="similarity">
    <text evidence="1">Belongs to the CowN family.</text>
</comment>
<proteinExistence type="inferred from homology"/>
<name>COWN_PARM1</name>
<sequence length="98" mass="10907">MTATTQADRYISFSGIDCDGNAKIVLERVVALVALPEYANCFWDRFLIRLAEADKVGARKADELCLACSNTYYIEELFEAAGDEMGLAALRRLEDECC</sequence>